<sequence>MAQAHIQGSPCPLLPPGRMSWPQGALLLLWLFSPPLRAGGGGVAVTSAAGGGSPPATSCPAACSCSNQASRVICTRRELAEVPASIPVNTRYLNLQENSIQVIRTDTFKHLRHLEILQLSKNLVRKIEVGAFNGLPSLNTLELFDNRLTTVPTQAFEYLSKLRELWLRNNPIESIPSYAFNRVPSLRRLDLGELKRLEYISEAAFEGLVNLRYLNLGMCNLKDIPNLTALVRLEELELSGNRLDLIRPGSFQGLTSLRKLWLMHAQVATIERNAFDDLKSLEELNLSHNNLMSLPHDLFTPLHRLERVHLNHNPWHCNCDVLWLSWWLKETVPSNTTCCARCHAPAGLKGRYIGELDQSHFTCYAPVIVEPPTDLNVTEGMAAELKCRTGTSMTSVNWLTPNGTLMTHGSYRVRISVLHDGTLNFTNVTVQDTGQYTCMVTNSAGNTTASATLNVSAVDPVAAGGPGGGGPGGGGGAGGAGGYTYFTTVTVETLETQPGEEAQQPRGTEKEPPGPTTDGAWGGGRPDAAAPASASTTAPAPRSSRPTEKAFTVPITDVTENALKDLDDVMKTTKIIIGCFVAITFMAAVMLVAFYKLRKQHQLHKHHGPTRTVEIINVEDELPAASAVSVAAAAAVAGGAGVGGDSHLALPALERDHLNHHHYVAAAFKAHYGGNPGGGCGAKGPGLNSIHEPLLFKSGSKENVQETQI</sequence>
<feature type="signal peptide" evidence="3">
    <location>
        <begin position="1"/>
        <end position="38"/>
    </location>
</feature>
<feature type="chain" id="PRO_0000390416" description="Leucine-rich repeat-containing protein 4B">
    <location>
        <begin position="39"/>
        <end position="709"/>
    </location>
</feature>
<feature type="transmembrane region" description="Helical" evidence="3">
    <location>
        <begin position="575"/>
        <end position="595"/>
    </location>
</feature>
<feature type="domain" description="LRRNT">
    <location>
        <begin position="50"/>
        <end position="88"/>
    </location>
</feature>
<feature type="repeat" description="LRR 1">
    <location>
        <begin position="89"/>
        <end position="110"/>
    </location>
</feature>
<feature type="repeat" description="LRR 2">
    <location>
        <begin position="113"/>
        <end position="134"/>
    </location>
</feature>
<feature type="repeat" description="LRR 3">
    <location>
        <begin position="137"/>
        <end position="158"/>
    </location>
</feature>
<feature type="repeat" description="LRR 4">
    <location>
        <begin position="161"/>
        <end position="182"/>
    </location>
</feature>
<feature type="repeat" description="LRR 5">
    <location>
        <begin position="185"/>
        <end position="207"/>
    </location>
</feature>
<feature type="repeat" description="LRR 6">
    <location>
        <begin position="210"/>
        <end position="231"/>
    </location>
</feature>
<feature type="repeat" description="LRR 7">
    <location>
        <begin position="232"/>
        <end position="253"/>
    </location>
</feature>
<feature type="repeat" description="LRR 8">
    <location>
        <begin position="256"/>
        <end position="277"/>
    </location>
</feature>
<feature type="repeat" description="LRR 9">
    <location>
        <begin position="280"/>
        <end position="301"/>
    </location>
</feature>
<feature type="domain" description="LRRCT">
    <location>
        <begin position="313"/>
        <end position="365"/>
    </location>
</feature>
<feature type="domain" description="Ig-like C2-type">
    <location>
        <begin position="366"/>
        <end position="454"/>
    </location>
</feature>
<feature type="region of interest" description="Disordered" evidence="5">
    <location>
        <begin position="496"/>
        <end position="552"/>
    </location>
</feature>
<feature type="compositionally biased region" description="Low complexity" evidence="5">
    <location>
        <begin position="528"/>
        <end position="544"/>
    </location>
</feature>
<feature type="modified residue" description="Phosphoserine" evidence="2">
    <location>
        <position position="689"/>
    </location>
</feature>
<feature type="glycosylation site" description="N-linked (GlcNAc...) asparagine" evidence="3">
    <location>
        <position position="376"/>
    </location>
</feature>
<feature type="glycosylation site" description="N-linked (GlcNAc...) asparagine" evidence="8">
    <location>
        <position position="402"/>
    </location>
</feature>
<feature type="glycosylation site" description="N-linked (GlcNAc...) asparagine" evidence="3">
    <location>
        <position position="424"/>
    </location>
</feature>
<feature type="glycosylation site" description="N-linked (GlcNAc...) asparagine" evidence="3">
    <location>
        <position position="427"/>
    </location>
</feature>
<feature type="glycosylation site" description="N-linked (GlcNAc...) asparagine" evidence="3">
    <location>
        <position position="446"/>
    </location>
</feature>
<feature type="disulfide bond" evidence="4">
    <location>
        <begin position="387"/>
        <end position="438"/>
    </location>
</feature>
<organism>
    <name type="scientific">Rattus norvegicus</name>
    <name type="common">Rat</name>
    <dbReference type="NCBI Taxonomy" id="10116"/>
    <lineage>
        <taxon>Eukaryota</taxon>
        <taxon>Metazoa</taxon>
        <taxon>Chordata</taxon>
        <taxon>Craniata</taxon>
        <taxon>Vertebrata</taxon>
        <taxon>Euteleostomi</taxon>
        <taxon>Mammalia</taxon>
        <taxon>Eutheria</taxon>
        <taxon>Euarchontoglires</taxon>
        <taxon>Glires</taxon>
        <taxon>Rodentia</taxon>
        <taxon>Myomorpha</taxon>
        <taxon>Muroidea</taxon>
        <taxon>Muridae</taxon>
        <taxon>Murinae</taxon>
        <taxon>Rattus</taxon>
    </lineage>
</organism>
<dbReference type="EMBL" id="CB608563">
    <property type="status" value="NOT_ANNOTATED_CDS"/>
    <property type="molecule type" value="mRNA"/>
</dbReference>
<dbReference type="RefSeq" id="NP_001258010.1">
    <property type="nucleotide sequence ID" value="NM_001271081.1"/>
</dbReference>
<dbReference type="RefSeq" id="XP_006229117.1">
    <property type="nucleotide sequence ID" value="XM_006229055.4"/>
</dbReference>
<dbReference type="SMR" id="P0CC10"/>
<dbReference type="BioGRID" id="259067">
    <property type="interactions" value="1"/>
</dbReference>
<dbReference type="FunCoup" id="P0CC10">
    <property type="interactions" value="779"/>
</dbReference>
<dbReference type="STRING" id="10116.ENSRNOP00000026259"/>
<dbReference type="GlyCosmos" id="P0CC10">
    <property type="glycosylation" value="5 sites, 2 glycans"/>
</dbReference>
<dbReference type="GlyGen" id="P0CC10">
    <property type="glycosylation" value="6 sites, 2 N-linked glycans (1 site)"/>
</dbReference>
<dbReference type="iPTMnet" id="P0CC10"/>
<dbReference type="PhosphoSitePlus" id="P0CC10"/>
<dbReference type="PaxDb" id="10116-ENSRNOP00000026259"/>
<dbReference type="ABCD" id="P0CC10">
    <property type="antibodies" value="1 sequenced antibody"/>
</dbReference>
<dbReference type="Ensembl" id="ENSRNOT00000026259.8">
    <property type="protein sequence ID" value="ENSRNOP00000026259.5"/>
    <property type="gene ID" value="ENSRNOG00000019418.8"/>
</dbReference>
<dbReference type="GeneID" id="308571"/>
<dbReference type="KEGG" id="rno:308571"/>
<dbReference type="UCSC" id="RGD:1307121">
    <property type="organism name" value="rat"/>
</dbReference>
<dbReference type="AGR" id="RGD:1307121"/>
<dbReference type="CTD" id="94030"/>
<dbReference type="RGD" id="1307121">
    <property type="gene designation" value="Lrrc4b"/>
</dbReference>
<dbReference type="eggNOG" id="KOG0619">
    <property type="taxonomic scope" value="Eukaryota"/>
</dbReference>
<dbReference type="GeneTree" id="ENSGT00940000160261"/>
<dbReference type="HOGENOM" id="CLU_000288_18_24_1"/>
<dbReference type="InParanoid" id="P0CC10"/>
<dbReference type="OMA" id="YKAHYNN"/>
<dbReference type="OrthoDB" id="28057at2759"/>
<dbReference type="PhylomeDB" id="P0CC10"/>
<dbReference type="TreeFam" id="TF324303"/>
<dbReference type="Reactome" id="R-RNO-388844">
    <property type="pathway name" value="Receptor-type tyrosine-protein phosphatases"/>
</dbReference>
<dbReference type="PRO" id="PR:P0CC10"/>
<dbReference type="Proteomes" id="UP000002494">
    <property type="component" value="Chromosome 1"/>
</dbReference>
<dbReference type="Bgee" id="ENSRNOG00000019418">
    <property type="expression patterns" value="Expressed in frontal cortex and 12 other cell types or tissues"/>
</dbReference>
<dbReference type="GO" id="GO:0044300">
    <property type="term" value="C:cerebellar mossy fiber"/>
    <property type="evidence" value="ECO:0000266"/>
    <property type="project" value="RGD"/>
</dbReference>
<dbReference type="GO" id="GO:0098978">
    <property type="term" value="C:glutamatergic synapse"/>
    <property type="evidence" value="ECO:0000314"/>
    <property type="project" value="SynGO"/>
</dbReference>
<dbReference type="GO" id="GO:0005886">
    <property type="term" value="C:plasma membrane"/>
    <property type="evidence" value="ECO:0000318"/>
    <property type="project" value="GO_Central"/>
</dbReference>
<dbReference type="GO" id="GO:0098839">
    <property type="term" value="C:postsynaptic density membrane"/>
    <property type="evidence" value="ECO:0000314"/>
    <property type="project" value="SynGO"/>
</dbReference>
<dbReference type="GO" id="GO:0042734">
    <property type="term" value="C:presynaptic membrane"/>
    <property type="evidence" value="ECO:0007669"/>
    <property type="project" value="UniProtKB-SubCell"/>
</dbReference>
<dbReference type="GO" id="GO:0005102">
    <property type="term" value="F:signaling receptor binding"/>
    <property type="evidence" value="ECO:0000266"/>
    <property type="project" value="RGD"/>
</dbReference>
<dbReference type="GO" id="GO:0051965">
    <property type="term" value="P:positive regulation of synapse assembly"/>
    <property type="evidence" value="ECO:0000266"/>
    <property type="project" value="RGD"/>
</dbReference>
<dbReference type="GO" id="GO:0099151">
    <property type="term" value="P:regulation of postsynaptic density assembly"/>
    <property type="evidence" value="ECO:0000314"/>
    <property type="project" value="SynGO"/>
</dbReference>
<dbReference type="GO" id="GO:1905606">
    <property type="term" value="P:regulation of presynapse assembly"/>
    <property type="evidence" value="ECO:0000314"/>
    <property type="project" value="SynGO"/>
</dbReference>
<dbReference type="GO" id="GO:0099560">
    <property type="term" value="P:synaptic membrane adhesion"/>
    <property type="evidence" value="ECO:0000314"/>
    <property type="project" value="SynGO"/>
</dbReference>
<dbReference type="FunFam" id="3.80.10.10:FF:000012">
    <property type="entry name" value="Leucine rich repeat containing 4"/>
    <property type="match status" value="1"/>
</dbReference>
<dbReference type="FunFam" id="2.60.40.10:FF:000076">
    <property type="entry name" value="Leucine-rich repeat and Ig domain-containing 4"/>
    <property type="match status" value="1"/>
</dbReference>
<dbReference type="Gene3D" id="2.60.40.10">
    <property type="entry name" value="Immunoglobulins"/>
    <property type="match status" value="1"/>
</dbReference>
<dbReference type="Gene3D" id="3.80.10.10">
    <property type="entry name" value="Ribonuclease Inhibitor"/>
    <property type="match status" value="1"/>
</dbReference>
<dbReference type="InterPro" id="IPR000483">
    <property type="entry name" value="Cys-rich_flank_reg_C"/>
</dbReference>
<dbReference type="InterPro" id="IPR007110">
    <property type="entry name" value="Ig-like_dom"/>
</dbReference>
<dbReference type="InterPro" id="IPR036179">
    <property type="entry name" value="Ig-like_dom_sf"/>
</dbReference>
<dbReference type="InterPro" id="IPR013783">
    <property type="entry name" value="Ig-like_fold"/>
</dbReference>
<dbReference type="InterPro" id="IPR013098">
    <property type="entry name" value="Ig_I-set"/>
</dbReference>
<dbReference type="InterPro" id="IPR003599">
    <property type="entry name" value="Ig_sub"/>
</dbReference>
<dbReference type="InterPro" id="IPR003598">
    <property type="entry name" value="Ig_sub2"/>
</dbReference>
<dbReference type="InterPro" id="IPR001611">
    <property type="entry name" value="Leu-rich_rpt"/>
</dbReference>
<dbReference type="InterPro" id="IPR003591">
    <property type="entry name" value="Leu-rich_rpt_typical-subtyp"/>
</dbReference>
<dbReference type="InterPro" id="IPR032675">
    <property type="entry name" value="LRR_dom_sf"/>
</dbReference>
<dbReference type="InterPro" id="IPR050541">
    <property type="entry name" value="LRR_TM_domain-containing"/>
</dbReference>
<dbReference type="InterPro" id="IPR000372">
    <property type="entry name" value="LRRNT"/>
</dbReference>
<dbReference type="PANTHER" id="PTHR24369">
    <property type="entry name" value="ANTIGEN BSP, PUTATIVE-RELATED"/>
    <property type="match status" value="1"/>
</dbReference>
<dbReference type="PANTHER" id="PTHR24369:SF102">
    <property type="entry name" value="LEUCINE-RICH REPEAT-CONTAINING PROTEIN 4B"/>
    <property type="match status" value="1"/>
</dbReference>
<dbReference type="Pfam" id="PF07679">
    <property type="entry name" value="I-set"/>
    <property type="match status" value="1"/>
</dbReference>
<dbReference type="Pfam" id="PF00560">
    <property type="entry name" value="LRR_1"/>
    <property type="match status" value="1"/>
</dbReference>
<dbReference type="Pfam" id="PF13855">
    <property type="entry name" value="LRR_8"/>
    <property type="match status" value="3"/>
</dbReference>
<dbReference type="SMART" id="SM00409">
    <property type="entry name" value="IG"/>
    <property type="match status" value="1"/>
</dbReference>
<dbReference type="SMART" id="SM00408">
    <property type="entry name" value="IGc2"/>
    <property type="match status" value="1"/>
</dbReference>
<dbReference type="SMART" id="SM00369">
    <property type="entry name" value="LRR_TYP"/>
    <property type="match status" value="8"/>
</dbReference>
<dbReference type="SMART" id="SM00082">
    <property type="entry name" value="LRRCT"/>
    <property type="match status" value="1"/>
</dbReference>
<dbReference type="SMART" id="SM00013">
    <property type="entry name" value="LRRNT"/>
    <property type="match status" value="1"/>
</dbReference>
<dbReference type="SUPFAM" id="SSF48726">
    <property type="entry name" value="Immunoglobulin"/>
    <property type="match status" value="1"/>
</dbReference>
<dbReference type="SUPFAM" id="SSF52058">
    <property type="entry name" value="L domain-like"/>
    <property type="match status" value="1"/>
</dbReference>
<dbReference type="PROSITE" id="PS50835">
    <property type="entry name" value="IG_LIKE"/>
    <property type="match status" value="1"/>
</dbReference>
<dbReference type="PROSITE" id="PS51450">
    <property type="entry name" value="LRR"/>
    <property type="match status" value="7"/>
</dbReference>
<name>LRC4B_RAT</name>
<evidence type="ECO:0000250" key="1"/>
<evidence type="ECO:0000250" key="2">
    <source>
        <dbReference type="UniProtKB" id="P0C192"/>
    </source>
</evidence>
<evidence type="ECO:0000255" key="3"/>
<evidence type="ECO:0000255" key="4">
    <source>
        <dbReference type="PROSITE-ProRule" id="PRU00114"/>
    </source>
</evidence>
<evidence type="ECO:0000256" key="5">
    <source>
        <dbReference type="SAM" id="MobiDB-lite"/>
    </source>
</evidence>
<evidence type="ECO:0000269" key="6">
    <source>
    </source>
</evidence>
<evidence type="ECO:0000269" key="7">
    <source>
    </source>
</evidence>
<evidence type="ECO:0007744" key="8">
    <source>
    </source>
</evidence>
<proteinExistence type="evidence at protein level"/>
<protein>
    <recommendedName>
        <fullName>Leucine-rich repeat-containing protein 4B</fullName>
    </recommendedName>
    <alternativeName>
        <fullName>Netrin-G3 ligand</fullName>
        <shortName>NGL-3</shortName>
    </alternativeName>
</protein>
<keyword id="KW-1003">Cell membrane</keyword>
<keyword id="KW-0966">Cell projection</keyword>
<keyword id="KW-1015">Disulfide bond</keyword>
<keyword id="KW-0325">Glycoprotein</keyword>
<keyword id="KW-0393">Immunoglobulin domain</keyword>
<keyword id="KW-0433">Leucine-rich repeat</keyword>
<keyword id="KW-0472">Membrane</keyword>
<keyword id="KW-0597">Phosphoprotein</keyword>
<keyword id="KW-1185">Reference proteome</keyword>
<keyword id="KW-0677">Repeat</keyword>
<keyword id="KW-0732">Signal</keyword>
<keyword id="KW-0770">Synapse</keyword>
<keyword id="KW-0812">Transmembrane</keyword>
<keyword id="KW-1133">Transmembrane helix</keyword>
<accession>P0CC10</accession>
<comment type="function">
    <text evidence="7">Synaptic adhesion protein. Regulates the formation of excitatory synapses. The trans-synaptic adhesion between LRRC4B and PTPRF regulates the formation of excitatory synapses in a bidirectional manner.</text>
</comment>
<comment type="subunit">
    <text evidence="1">Interacts with PTPRF. Interacts with DLG4 (By similarity).</text>
</comment>
<comment type="subcellular location">
    <subcellularLocation>
        <location evidence="7">Membrane</location>
        <topology evidence="7">Single-pass membrane protein</topology>
    </subcellularLocation>
    <subcellularLocation>
        <location evidence="7">Presynaptic cell membrane</location>
    </subcellularLocation>
</comment>
<comment type="tissue specificity">
    <text evidence="6">Mainly expressed in the brain. Widespread distribution in various brain regions (at protein level). Detected both embryonically and postnatally with stronger expression in postnatal stages.</text>
</comment>
<comment type="domain">
    <text evidence="1">The extreme C-terminus binds to the first 2 PDZ domains of DLG4.</text>
</comment>
<comment type="PTM">
    <text evidence="6 7">N-glycosylated. O-glycosylated; contains sialic acid.</text>
</comment>
<reference key="1">
    <citation type="submission" date="2003-04" db="EMBL/GenBank/DDBJ databases">
        <title>Amgen rat EST program.</title>
        <authorList>
            <consortium name="Amgen EST program"/>
        </authorList>
    </citation>
    <scope>NUCLEOTIDE SEQUENCE [LARGE SCALE MRNA] OF 1-189</scope>
</reference>
<reference key="2">
    <citation type="journal article" date="2006" name="Nat. Neurosci.">
        <title>NGL family PSD-95-interacting adhesion molecules regulate excitatory synapse formation.</title>
        <authorList>
            <person name="Kim S."/>
            <person name="Burette A."/>
            <person name="Chung H.S."/>
            <person name="Kwon S.-K."/>
            <person name="Woo J."/>
            <person name="Lee H.W."/>
            <person name="Kim K."/>
            <person name="Kim H."/>
            <person name="Weinberg R.J."/>
            <person name="Kim E."/>
        </authorList>
    </citation>
    <scope>TISSUE SPECIFICITY</scope>
    <scope>GLYCOSYLATION</scope>
</reference>
<reference key="3">
    <citation type="journal article" date="2009" name="Nat. Neurosci.">
        <title>Trans-synaptic adhesion between NGL-3 and LAR regulates the formation of excitatory synapses.</title>
        <authorList>
            <person name="Woo J."/>
            <person name="Kwon S.K."/>
            <person name="Choi S."/>
            <person name="Kim S."/>
            <person name="Lee J.-R."/>
            <person name="Dunah A.W."/>
            <person name="Sheng M."/>
            <person name="Kim E."/>
        </authorList>
    </citation>
    <scope>FUNCTION</scope>
    <scope>INTERACTION WITH PTPRF</scope>
    <scope>SUBCELLULAR LOCATION</scope>
    <scope>GLYCOSYLATION</scope>
</reference>
<reference key="4">
    <citation type="journal article" date="2013" name="J. Proteome Res.">
        <title>Site-specific glycan-peptide analysis for determination of N-glycoproteome heterogeneity.</title>
        <authorList>
            <person name="Parker B.L."/>
            <person name="Thaysen-Andersen M."/>
            <person name="Solis N."/>
            <person name="Scott N.E."/>
            <person name="Larsen M.R."/>
            <person name="Graham M.E."/>
            <person name="Packer N.H."/>
            <person name="Cordwell S.J."/>
        </authorList>
    </citation>
    <scope>GLYCOSYLATION [LARGE SCALE ANALYSIS] AT ASN-402</scope>
    <scope>IDENTIFICATION BY MASS SPECTROMETRY [LARGE SCALE ANALYSIS]</scope>
    <source>
        <tissue>Brain</tissue>
    </source>
</reference>
<gene>
    <name type="primary">Lrrc4b</name>
    <name type="synonym">Lrig4</name>
</gene>